<feature type="chain" id="PRO_1000165687" description="Large ribosomal subunit protein uL1">
    <location>
        <begin position="1"/>
        <end position="231"/>
    </location>
</feature>
<keyword id="KW-1185">Reference proteome</keyword>
<keyword id="KW-0678">Repressor</keyword>
<keyword id="KW-0687">Ribonucleoprotein</keyword>
<keyword id="KW-0689">Ribosomal protein</keyword>
<keyword id="KW-0694">RNA-binding</keyword>
<keyword id="KW-0699">rRNA-binding</keyword>
<keyword id="KW-0810">Translation regulation</keyword>
<keyword id="KW-0820">tRNA-binding</keyword>
<name>RL1_MACCJ</name>
<comment type="function">
    <text evidence="1">Binds directly to 23S rRNA. The L1 stalk is quite mobile in the ribosome, and is involved in E site tRNA release.</text>
</comment>
<comment type="function">
    <text evidence="1">Protein L1 is also a translational repressor protein, it controls the translation of the L11 operon by binding to its mRNA.</text>
</comment>
<comment type="subunit">
    <text evidence="1">Part of the 50S ribosomal subunit.</text>
</comment>
<comment type="similarity">
    <text evidence="1">Belongs to the universal ribosomal protein uL1 family.</text>
</comment>
<dbReference type="EMBL" id="AP009484">
    <property type="protein sequence ID" value="BAH18577.1"/>
    <property type="molecule type" value="Genomic_DNA"/>
</dbReference>
<dbReference type="RefSeq" id="WP_015912369.1">
    <property type="nucleotide sequence ID" value="NC_011999.1"/>
</dbReference>
<dbReference type="SMR" id="B9E8Q9"/>
<dbReference type="STRING" id="458233.MCCL_1870"/>
<dbReference type="GeneID" id="61130256"/>
<dbReference type="KEGG" id="mcl:MCCL_1870"/>
<dbReference type="eggNOG" id="COG0081">
    <property type="taxonomic scope" value="Bacteria"/>
</dbReference>
<dbReference type="HOGENOM" id="CLU_062853_0_0_9"/>
<dbReference type="OrthoDB" id="9803740at2"/>
<dbReference type="Proteomes" id="UP000001383">
    <property type="component" value="Chromosome"/>
</dbReference>
<dbReference type="GO" id="GO:0015934">
    <property type="term" value="C:large ribosomal subunit"/>
    <property type="evidence" value="ECO:0007669"/>
    <property type="project" value="InterPro"/>
</dbReference>
<dbReference type="GO" id="GO:0019843">
    <property type="term" value="F:rRNA binding"/>
    <property type="evidence" value="ECO:0007669"/>
    <property type="project" value="UniProtKB-UniRule"/>
</dbReference>
<dbReference type="GO" id="GO:0003735">
    <property type="term" value="F:structural constituent of ribosome"/>
    <property type="evidence" value="ECO:0007669"/>
    <property type="project" value="InterPro"/>
</dbReference>
<dbReference type="GO" id="GO:0000049">
    <property type="term" value="F:tRNA binding"/>
    <property type="evidence" value="ECO:0007669"/>
    <property type="project" value="UniProtKB-KW"/>
</dbReference>
<dbReference type="GO" id="GO:0006417">
    <property type="term" value="P:regulation of translation"/>
    <property type="evidence" value="ECO:0007669"/>
    <property type="project" value="UniProtKB-KW"/>
</dbReference>
<dbReference type="GO" id="GO:0006412">
    <property type="term" value="P:translation"/>
    <property type="evidence" value="ECO:0007669"/>
    <property type="project" value="UniProtKB-UniRule"/>
</dbReference>
<dbReference type="CDD" id="cd00403">
    <property type="entry name" value="Ribosomal_L1"/>
    <property type="match status" value="1"/>
</dbReference>
<dbReference type="FunFam" id="3.40.50.790:FF:000001">
    <property type="entry name" value="50S ribosomal protein L1"/>
    <property type="match status" value="1"/>
</dbReference>
<dbReference type="Gene3D" id="3.30.190.20">
    <property type="match status" value="1"/>
</dbReference>
<dbReference type="Gene3D" id="3.40.50.790">
    <property type="match status" value="1"/>
</dbReference>
<dbReference type="HAMAP" id="MF_01318_B">
    <property type="entry name" value="Ribosomal_uL1_B"/>
    <property type="match status" value="1"/>
</dbReference>
<dbReference type="InterPro" id="IPR005878">
    <property type="entry name" value="Ribosom_uL1_bac-type"/>
</dbReference>
<dbReference type="InterPro" id="IPR002143">
    <property type="entry name" value="Ribosomal_uL1"/>
</dbReference>
<dbReference type="InterPro" id="IPR023674">
    <property type="entry name" value="Ribosomal_uL1-like"/>
</dbReference>
<dbReference type="InterPro" id="IPR028364">
    <property type="entry name" value="Ribosomal_uL1/biogenesis"/>
</dbReference>
<dbReference type="InterPro" id="IPR016095">
    <property type="entry name" value="Ribosomal_uL1_3-a/b-sand"/>
</dbReference>
<dbReference type="InterPro" id="IPR023673">
    <property type="entry name" value="Ribosomal_uL1_CS"/>
</dbReference>
<dbReference type="NCBIfam" id="TIGR01169">
    <property type="entry name" value="rplA_bact"/>
    <property type="match status" value="1"/>
</dbReference>
<dbReference type="PANTHER" id="PTHR36427">
    <property type="entry name" value="54S RIBOSOMAL PROTEIN L1, MITOCHONDRIAL"/>
    <property type="match status" value="1"/>
</dbReference>
<dbReference type="PANTHER" id="PTHR36427:SF3">
    <property type="entry name" value="LARGE RIBOSOMAL SUBUNIT PROTEIN UL1M"/>
    <property type="match status" value="1"/>
</dbReference>
<dbReference type="Pfam" id="PF00687">
    <property type="entry name" value="Ribosomal_L1"/>
    <property type="match status" value="1"/>
</dbReference>
<dbReference type="PIRSF" id="PIRSF002155">
    <property type="entry name" value="Ribosomal_L1"/>
    <property type="match status" value="1"/>
</dbReference>
<dbReference type="SUPFAM" id="SSF56808">
    <property type="entry name" value="Ribosomal protein L1"/>
    <property type="match status" value="1"/>
</dbReference>
<dbReference type="PROSITE" id="PS01199">
    <property type="entry name" value="RIBOSOMAL_L1"/>
    <property type="match status" value="1"/>
</dbReference>
<sequence>MAKKGKKYQEAAQKVDSTKFYSVEEAIKLAKETSTVNFDASVEVAFRLGIDVRKNDQQIRGAVVLPNGTGKTQRVLVFAKGEKLKEAEAAGADFVGDSEYINKINQGWFDFDVIVATPDMMGEVGKLGRVLGPKGLMPNPKTGTVTMDVTKAVQEIKAGKVEYRAEKSGIVHAAIGKVSFDADKLVENFNTLKDVLAKAKPASSKGTYFKTVAVTTTMGPGIKIDPSEVRN</sequence>
<gene>
    <name evidence="1" type="primary">rplA</name>
    <name type="ordered locus">MCCL_1870</name>
</gene>
<protein>
    <recommendedName>
        <fullName evidence="1">Large ribosomal subunit protein uL1</fullName>
    </recommendedName>
    <alternativeName>
        <fullName evidence="2">50S ribosomal protein L1</fullName>
    </alternativeName>
</protein>
<proteinExistence type="inferred from homology"/>
<evidence type="ECO:0000255" key="1">
    <source>
        <dbReference type="HAMAP-Rule" id="MF_01318"/>
    </source>
</evidence>
<evidence type="ECO:0000305" key="2"/>
<accession>B9E8Q9</accession>
<organism>
    <name type="scientific">Macrococcus caseolyticus (strain JCSC5402)</name>
    <name type="common">Macrococcoides caseolyticum</name>
    <dbReference type="NCBI Taxonomy" id="458233"/>
    <lineage>
        <taxon>Bacteria</taxon>
        <taxon>Bacillati</taxon>
        <taxon>Bacillota</taxon>
        <taxon>Bacilli</taxon>
        <taxon>Bacillales</taxon>
        <taxon>Staphylococcaceae</taxon>
        <taxon>Macrococcoides</taxon>
    </lineage>
</organism>
<reference key="1">
    <citation type="journal article" date="2009" name="J. Bacteriol.">
        <title>Complete genome sequence of Macrococcus caseolyticus strain JCSCS5402, reflecting the ancestral genome of the human-pathogenic staphylococci.</title>
        <authorList>
            <person name="Baba T."/>
            <person name="Kuwahara-Arai K."/>
            <person name="Uchiyama I."/>
            <person name="Takeuchi F."/>
            <person name="Ito T."/>
            <person name="Hiramatsu K."/>
        </authorList>
    </citation>
    <scope>NUCLEOTIDE SEQUENCE [LARGE SCALE GENOMIC DNA]</scope>
    <source>
        <strain>JCSC5402</strain>
    </source>
</reference>